<comment type="function">
    <text evidence="1">Acts as a chaperone.</text>
</comment>
<comment type="similarity">
    <text evidence="1">Belongs to the heat shock protein 70 family.</text>
</comment>
<keyword id="KW-0067">ATP-binding</keyword>
<keyword id="KW-0143">Chaperone</keyword>
<keyword id="KW-0547">Nucleotide-binding</keyword>
<proteinExistence type="inferred from homology"/>
<gene>
    <name evidence="1" type="primary">dnaK</name>
    <name type="ordered locus">PTO0840</name>
</gene>
<evidence type="ECO:0000255" key="1">
    <source>
        <dbReference type="HAMAP-Rule" id="MF_00332"/>
    </source>
</evidence>
<evidence type="ECO:0000256" key="2">
    <source>
        <dbReference type="SAM" id="MobiDB-lite"/>
    </source>
</evidence>
<protein>
    <recommendedName>
        <fullName evidence="1">Chaperone protein DnaK</fullName>
    </recommendedName>
    <alternativeName>
        <fullName evidence="1">HSP70</fullName>
    </alternativeName>
    <alternativeName>
        <fullName evidence="1">Heat shock 70 kDa protein</fullName>
    </alternativeName>
    <alternativeName>
        <fullName evidence="1">Heat shock protein 70</fullName>
    </alternativeName>
</protein>
<accession>Q6L0S7</accession>
<dbReference type="EMBL" id="AE017261">
    <property type="protein sequence ID" value="AAT43425.1"/>
    <property type="molecule type" value="Genomic_DNA"/>
</dbReference>
<dbReference type="RefSeq" id="WP_011177641.1">
    <property type="nucleotide sequence ID" value="NC_005877.1"/>
</dbReference>
<dbReference type="SMR" id="Q6L0S7"/>
<dbReference type="STRING" id="263820.PTO0840"/>
<dbReference type="PaxDb" id="263820-PTO0840"/>
<dbReference type="GeneID" id="2844547"/>
<dbReference type="KEGG" id="pto:PTO0840"/>
<dbReference type="PATRIC" id="fig|263820.9.peg.878"/>
<dbReference type="eggNOG" id="arCOG03060">
    <property type="taxonomic scope" value="Archaea"/>
</dbReference>
<dbReference type="HOGENOM" id="CLU_005965_2_4_2"/>
<dbReference type="InParanoid" id="Q6L0S7"/>
<dbReference type="OrthoDB" id="9944at2157"/>
<dbReference type="Proteomes" id="UP000000438">
    <property type="component" value="Chromosome"/>
</dbReference>
<dbReference type="GO" id="GO:0005524">
    <property type="term" value="F:ATP binding"/>
    <property type="evidence" value="ECO:0007669"/>
    <property type="project" value="UniProtKB-UniRule"/>
</dbReference>
<dbReference type="GO" id="GO:0140662">
    <property type="term" value="F:ATP-dependent protein folding chaperone"/>
    <property type="evidence" value="ECO:0007669"/>
    <property type="project" value="InterPro"/>
</dbReference>
<dbReference type="GO" id="GO:0051082">
    <property type="term" value="F:unfolded protein binding"/>
    <property type="evidence" value="ECO:0007669"/>
    <property type="project" value="InterPro"/>
</dbReference>
<dbReference type="CDD" id="cd10234">
    <property type="entry name" value="ASKHA_NBD_HSP70_DnaK-like"/>
    <property type="match status" value="1"/>
</dbReference>
<dbReference type="FunFam" id="2.60.34.10:FF:000014">
    <property type="entry name" value="Chaperone protein DnaK HSP70"/>
    <property type="match status" value="1"/>
</dbReference>
<dbReference type="FunFam" id="1.20.1270.10:FF:000001">
    <property type="entry name" value="Molecular chaperone DnaK"/>
    <property type="match status" value="1"/>
</dbReference>
<dbReference type="FunFam" id="3.30.420.40:FF:000071">
    <property type="entry name" value="Molecular chaperone DnaK"/>
    <property type="match status" value="1"/>
</dbReference>
<dbReference type="FunFam" id="3.90.640.10:FF:000003">
    <property type="entry name" value="Molecular chaperone DnaK"/>
    <property type="match status" value="1"/>
</dbReference>
<dbReference type="Gene3D" id="1.20.1270.10">
    <property type="match status" value="1"/>
</dbReference>
<dbReference type="Gene3D" id="3.30.420.40">
    <property type="match status" value="2"/>
</dbReference>
<dbReference type="Gene3D" id="3.90.640.10">
    <property type="entry name" value="Actin, Chain A, domain 4"/>
    <property type="match status" value="1"/>
</dbReference>
<dbReference type="Gene3D" id="2.60.34.10">
    <property type="entry name" value="Substrate Binding Domain Of DNAk, Chain A, domain 1"/>
    <property type="match status" value="1"/>
</dbReference>
<dbReference type="HAMAP" id="MF_00332">
    <property type="entry name" value="DnaK"/>
    <property type="match status" value="1"/>
</dbReference>
<dbReference type="InterPro" id="IPR043129">
    <property type="entry name" value="ATPase_NBD"/>
</dbReference>
<dbReference type="InterPro" id="IPR012725">
    <property type="entry name" value="Chaperone_DnaK"/>
</dbReference>
<dbReference type="InterPro" id="IPR018181">
    <property type="entry name" value="Heat_shock_70_CS"/>
</dbReference>
<dbReference type="InterPro" id="IPR029048">
    <property type="entry name" value="HSP70_C_sf"/>
</dbReference>
<dbReference type="InterPro" id="IPR029047">
    <property type="entry name" value="HSP70_peptide-bd_sf"/>
</dbReference>
<dbReference type="InterPro" id="IPR013126">
    <property type="entry name" value="Hsp_70_fam"/>
</dbReference>
<dbReference type="NCBIfam" id="NF001413">
    <property type="entry name" value="PRK00290.1"/>
    <property type="match status" value="1"/>
</dbReference>
<dbReference type="NCBIfam" id="TIGR02350">
    <property type="entry name" value="prok_dnaK"/>
    <property type="match status" value="1"/>
</dbReference>
<dbReference type="PANTHER" id="PTHR19375">
    <property type="entry name" value="HEAT SHOCK PROTEIN 70KDA"/>
    <property type="match status" value="1"/>
</dbReference>
<dbReference type="Pfam" id="PF00012">
    <property type="entry name" value="HSP70"/>
    <property type="match status" value="2"/>
</dbReference>
<dbReference type="PRINTS" id="PR00301">
    <property type="entry name" value="HEATSHOCK70"/>
</dbReference>
<dbReference type="SUPFAM" id="SSF53067">
    <property type="entry name" value="Actin-like ATPase domain"/>
    <property type="match status" value="2"/>
</dbReference>
<dbReference type="SUPFAM" id="SSF100934">
    <property type="entry name" value="Heat shock protein 70kD (HSP70), C-terminal subdomain"/>
    <property type="match status" value="1"/>
</dbReference>
<dbReference type="SUPFAM" id="SSF100920">
    <property type="entry name" value="Heat shock protein 70kD (HSP70), peptide-binding domain"/>
    <property type="match status" value="1"/>
</dbReference>
<dbReference type="PROSITE" id="PS00297">
    <property type="entry name" value="HSP70_1"/>
    <property type="match status" value="1"/>
</dbReference>
<dbReference type="PROSITE" id="PS00329">
    <property type="entry name" value="HSP70_2"/>
    <property type="match status" value="1"/>
</dbReference>
<dbReference type="PROSITE" id="PS01036">
    <property type="entry name" value="HSP70_3"/>
    <property type="match status" value="1"/>
</dbReference>
<reference key="1">
    <citation type="journal article" date="2004" name="Proc. Natl. Acad. Sci. U.S.A.">
        <title>Genome sequence of Picrophilus torridus and its implications for life around pH 0.</title>
        <authorList>
            <person name="Fuetterer O."/>
            <person name="Angelov A."/>
            <person name="Liesegang H."/>
            <person name="Gottschalk G."/>
            <person name="Schleper C."/>
            <person name="Schepers B."/>
            <person name="Dock C."/>
            <person name="Antranikian G."/>
            <person name="Liebl W."/>
        </authorList>
    </citation>
    <scope>NUCLEOTIDE SEQUENCE [LARGE SCALE GENOMIC DNA]</scope>
    <source>
        <strain>ATCC 700027 / DSM 9790 / JCM 10055 / NBRC 100828 / KAW 2/3</strain>
    </source>
</reference>
<name>DNAK_PICTO</name>
<sequence length="613" mass="66352">MSKIIGIDLGTSNSAAAVVISGKPTVIPAAEGVSLGGKAFPSYVAFTKDGQLLVGEPARRQALLNPEGTVYAAKRKMGTDYKYKIFGKEYTPQQISAFILQKIKRDAEAFLGEPVTDAVITVPAYFNDNQRQATKDAGAIAGLNVRRIINEPTAACLAYGIDKLNQTLKIVIYDLGGGTLDVTIMDFGQGVFQVLSTSGDTHLGGTDMDEAIVNFLADNFQRENGIDLRKDHSAYIRLRDAAEKAKIELSTVLETEINLPYITATQDGPKHLQYTLTRAKFEELIAPIVDRSKVPLDTALEGAKLKKGDIDKIILIGGPTRIPYVRKYVEDYFGRKAEGGVDPMEAVAMGAAIQGAVLAGEVKDIVLLDVTPLTLGIETLGGVMTPLIPANTTIPTKKSQIFTTAADMQTTVTIHVVQGERPLAKDDVSLGMFNLDGIPPAPRGVPQIEVTFDIDANGILNVSAKDLGTGKQQSISITATNKLSKDEIERMKKEAEQYAEQDKKAKEEIETINNAETLAYTAEKTINDAGDKIDESSKESVRSIVKDLRDAISSKDINKIKELSEKLTKEIQEIGTKMYQSQATQGTSQNSSQNNNSQNNNGDTVDADFKESK</sequence>
<feature type="chain" id="PRO_0000078601" description="Chaperone protein DnaK">
    <location>
        <begin position="1"/>
        <end position="613"/>
    </location>
</feature>
<feature type="region of interest" description="Disordered" evidence="2">
    <location>
        <begin position="578"/>
        <end position="613"/>
    </location>
</feature>
<feature type="compositionally biased region" description="Low complexity" evidence="2">
    <location>
        <begin position="580"/>
        <end position="602"/>
    </location>
</feature>
<organism>
    <name type="scientific">Picrophilus torridus (strain ATCC 700027 / DSM 9790 / JCM 10055 / NBRC 100828 / KAW 2/3)</name>
    <dbReference type="NCBI Taxonomy" id="1122961"/>
    <lineage>
        <taxon>Archaea</taxon>
        <taxon>Methanobacteriati</taxon>
        <taxon>Thermoplasmatota</taxon>
        <taxon>Thermoplasmata</taxon>
        <taxon>Thermoplasmatales</taxon>
        <taxon>Picrophilaceae</taxon>
        <taxon>Picrophilus</taxon>
    </lineage>
</organism>